<proteinExistence type="inferred from homology"/>
<keyword id="KW-0285">Flavoprotein</keyword>
<keyword id="KW-0288">FMN</keyword>
<keyword id="KW-0520">NAD</keyword>
<keyword id="KW-0521">NADP</keyword>
<keyword id="KW-0547">Nucleotide-binding</keyword>
<keyword id="KW-0560">Oxidoreductase</keyword>
<keyword id="KW-1185">Reference proteome</keyword>
<name>NQOR_RHORT</name>
<feature type="chain" id="PRO_0000291029" description="NAD(P)H dehydrogenase (quinone)">
    <location>
        <begin position="1"/>
        <end position="202"/>
    </location>
</feature>
<feature type="domain" description="Flavodoxin-like" evidence="1">
    <location>
        <begin position="7"/>
        <end position="193"/>
    </location>
</feature>
<feature type="binding site" evidence="1">
    <location>
        <begin position="13"/>
        <end position="18"/>
    </location>
    <ligand>
        <name>FMN</name>
        <dbReference type="ChEBI" id="CHEBI:58210"/>
    </ligand>
</feature>
<feature type="binding site" evidence="1">
    <location>
        <position position="15"/>
    </location>
    <ligand>
        <name>NAD(+)</name>
        <dbReference type="ChEBI" id="CHEBI:57540"/>
    </ligand>
</feature>
<feature type="binding site" evidence="1">
    <location>
        <begin position="82"/>
        <end position="84"/>
    </location>
    <ligand>
        <name>FMN</name>
        <dbReference type="ChEBI" id="CHEBI:58210"/>
    </ligand>
</feature>
<feature type="binding site" evidence="1">
    <location>
        <position position="102"/>
    </location>
    <ligand>
        <name>substrate</name>
    </ligand>
</feature>
<feature type="binding site" evidence="1">
    <location>
        <begin position="117"/>
        <end position="122"/>
    </location>
    <ligand>
        <name>FMN</name>
        <dbReference type="ChEBI" id="CHEBI:58210"/>
    </ligand>
</feature>
<feature type="binding site" evidence="1">
    <location>
        <position position="137"/>
    </location>
    <ligand>
        <name>FMN</name>
        <dbReference type="ChEBI" id="CHEBI:58210"/>
    </ligand>
</feature>
<reference key="1">
    <citation type="journal article" date="2011" name="Stand. Genomic Sci.">
        <title>Complete genome sequence of Rhodospirillum rubrum type strain (S1).</title>
        <authorList>
            <person name="Munk A.C."/>
            <person name="Copeland A."/>
            <person name="Lucas S."/>
            <person name="Lapidus A."/>
            <person name="Del Rio T.G."/>
            <person name="Barry K."/>
            <person name="Detter J.C."/>
            <person name="Hammon N."/>
            <person name="Israni S."/>
            <person name="Pitluck S."/>
            <person name="Brettin T."/>
            <person name="Bruce D."/>
            <person name="Han C."/>
            <person name="Tapia R."/>
            <person name="Gilna P."/>
            <person name="Schmutz J."/>
            <person name="Larimer F."/>
            <person name="Land M."/>
            <person name="Kyrpides N.C."/>
            <person name="Mavromatis K."/>
            <person name="Richardson P."/>
            <person name="Rohde M."/>
            <person name="Goeker M."/>
            <person name="Klenk H.P."/>
            <person name="Zhang Y."/>
            <person name="Roberts G.P."/>
            <person name="Reslewic S."/>
            <person name="Schwartz D.C."/>
        </authorList>
    </citation>
    <scope>NUCLEOTIDE SEQUENCE [LARGE SCALE GENOMIC DNA]</scope>
    <source>
        <strain>ATCC 11170 / ATH 1.1.1 / DSM 467 / LMG 4362 / NCIMB 8255 / S1</strain>
    </source>
</reference>
<organism>
    <name type="scientific">Rhodospirillum rubrum (strain ATCC 11170 / ATH 1.1.1 / DSM 467 / LMG 4362 / NCIMB 8255 / S1)</name>
    <dbReference type="NCBI Taxonomy" id="269796"/>
    <lineage>
        <taxon>Bacteria</taxon>
        <taxon>Pseudomonadati</taxon>
        <taxon>Pseudomonadota</taxon>
        <taxon>Alphaproteobacteria</taxon>
        <taxon>Rhodospirillales</taxon>
        <taxon>Rhodospirillaceae</taxon>
        <taxon>Rhodospirillum</taxon>
    </lineage>
</organism>
<protein>
    <recommendedName>
        <fullName evidence="1">NAD(P)H dehydrogenase (quinone)</fullName>
        <ecNumber evidence="1">1.6.5.2</ecNumber>
    </recommendedName>
    <alternativeName>
        <fullName>Flavoprotein WrbA</fullName>
    </alternativeName>
    <alternativeName>
        <fullName evidence="1">NAD(P)H:quinone oxidoreductase</fullName>
        <shortName evidence="1">NQO</shortName>
    </alternativeName>
</protein>
<evidence type="ECO:0000255" key="1">
    <source>
        <dbReference type="HAMAP-Rule" id="MF_01017"/>
    </source>
</evidence>
<comment type="catalytic activity">
    <reaction evidence="1">
        <text>a quinone + NADH + H(+) = a quinol + NAD(+)</text>
        <dbReference type="Rhea" id="RHEA:46160"/>
        <dbReference type="ChEBI" id="CHEBI:15378"/>
        <dbReference type="ChEBI" id="CHEBI:24646"/>
        <dbReference type="ChEBI" id="CHEBI:57540"/>
        <dbReference type="ChEBI" id="CHEBI:57945"/>
        <dbReference type="ChEBI" id="CHEBI:132124"/>
        <dbReference type="EC" id="1.6.5.2"/>
    </reaction>
</comment>
<comment type="catalytic activity">
    <reaction evidence="1">
        <text>a quinone + NADPH + H(+) = a quinol + NADP(+)</text>
        <dbReference type="Rhea" id="RHEA:46164"/>
        <dbReference type="ChEBI" id="CHEBI:15378"/>
        <dbReference type="ChEBI" id="CHEBI:24646"/>
        <dbReference type="ChEBI" id="CHEBI:57783"/>
        <dbReference type="ChEBI" id="CHEBI:58349"/>
        <dbReference type="ChEBI" id="CHEBI:132124"/>
        <dbReference type="EC" id="1.6.5.2"/>
    </reaction>
</comment>
<comment type="cofactor">
    <cofactor evidence="1">
        <name>FMN</name>
        <dbReference type="ChEBI" id="CHEBI:58210"/>
    </cofactor>
    <text evidence="1">Binds 1 FMN per monomer.</text>
</comment>
<comment type="similarity">
    <text evidence="1">Belongs to the WrbA family.</text>
</comment>
<dbReference type="EC" id="1.6.5.2" evidence="1"/>
<dbReference type="EMBL" id="CP000230">
    <property type="protein sequence ID" value="ABC21178.1"/>
    <property type="molecule type" value="Genomic_DNA"/>
</dbReference>
<dbReference type="RefSeq" id="YP_425465.1">
    <property type="nucleotide sequence ID" value="NC_007643.1"/>
</dbReference>
<dbReference type="SMR" id="Q2RXG7"/>
<dbReference type="STRING" id="269796.Rru_A0373"/>
<dbReference type="EnsemblBacteria" id="ABC21178">
    <property type="protein sequence ID" value="ABC21178"/>
    <property type="gene ID" value="Rru_A0373"/>
</dbReference>
<dbReference type="KEGG" id="rru:Rru_A0373"/>
<dbReference type="PATRIC" id="fig|269796.9.peg.430"/>
<dbReference type="eggNOG" id="COG0655">
    <property type="taxonomic scope" value="Bacteria"/>
</dbReference>
<dbReference type="HOGENOM" id="CLU_051402_0_2_5"/>
<dbReference type="PhylomeDB" id="Q2RXG7"/>
<dbReference type="Proteomes" id="UP000001929">
    <property type="component" value="Chromosome"/>
</dbReference>
<dbReference type="GO" id="GO:0016020">
    <property type="term" value="C:membrane"/>
    <property type="evidence" value="ECO:0007669"/>
    <property type="project" value="TreeGrafter"/>
</dbReference>
<dbReference type="GO" id="GO:0050660">
    <property type="term" value="F:flavin adenine dinucleotide binding"/>
    <property type="evidence" value="ECO:0007669"/>
    <property type="project" value="UniProtKB-UniRule"/>
</dbReference>
<dbReference type="GO" id="GO:0010181">
    <property type="term" value="F:FMN binding"/>
    <property type="evidence" value="ECO:0007669"/>
    <property type="project" value="InterPro"/>
</dbReference>
<dbReference type="GO" id="GO:0051287">
    <property type="term" value="F:NAD binding"/>
    <property type="evidence" value="ECO:0007669"/>
    <property type="project" value="UniProtKB-UniRule"/>
</dbReference>
<dbReference type="GO" id="GO:0050136">
    <property type="term" value="F:NADH:ubiquinone reductase (non-electrogenic) activity"/>
    <property type="evidence" value="ECO:0007669"/>
    <property type="project" value="RHEA"/>
</dbReference>
<dbReference type="GO" id="GO:0050661">
    <property type="term" value="F:NADP binding"/>
    <property type="evidence" value="ECO:0007669"/>
    <property type="project" value="UniProtKB-UniRule"/>
</dbReference>
<dbReference type="GO" id="GO:0008753">
    <property type="term" value="F:NADPH dehydrogenase (quinone) activity"/>
    <property type="evidence" value="ECO:0007669"/>
    <property type="project" value="RHEA"/>
</dbReference>
<dbReference type="FunFam" id="3.40.50.360:FF:000001">
    <property type="entry name" value="NAD(P)H dehydrogenase (Quinone) FQR1-like"/>
    <property type="match status" value="1"/>
</dbReference>
<dbReference type="Gene3D" id="3.40.50.360">
    <property type="match status" value="1"/>
</dbReference>
<dbReference type="HAMAP" id="MF_01017">
    <property type="entry name" value="NQOR"/>
    <property type="match status" value="1"/>
</dbReference>
<dbReference type="InterPro" id="IPR008254">
    <property type="entry name" value="Flavodoxin/NO_synth"/>
</dbReference>
<dbReference type="InterPro" id="IPR029039">
    <property type="entry name" value="Flavoprotein-like_sf"/>
</dbReference>
<dbReference type="InterPro" id="IPR010089">
    <property type="entry name" value="Flavoprotein_WrbA-like"/>
</dbReference>
<dbReference type="InterPro" id="IPR005025">
    <property type="entry name" value="FMN_Rdtase-like_dom"/>
</dbReference>
<dbReference type="InterPro" id="IPR037513">
    <property type="entry name" value="NQO"/>
</dbReference>
<dbReference type="NCBIfam" id="TIGR01755">
    <property type="entry name" value="flav_wrbA"/>
    <property type="match status" value="1"/>
</dbReference>
<dbReference type="NCBIfam" id="NF002999">
    <property type="entry name" value="PRK03767.1"/>
    <property type="match status" value="1"/>
</dbReference>
<dbReference type="PANTHER" id="PTHR30546">
    <property type="entry name" value="FLAVODOXIN-RELATED PROTEIN WRBA-RELATED"/>
    <property type="match status" value="1"/>
</dbReference>
<dbReference type="PANTHER" id="PTHR30546:SF23">
    <property type="entry name" value="FLAVOPROTEIN-LIKE PROTEIN YCP4-RELATED"/>
    <property type="match status" value="1"/>
</dbReference>
<dbReference type="Pfam" id="PF03358">
    <property type="entry name" value="FMN_red"/>
    <property type="match status" value="1"/>
</dbReference>
<dbReference type="SUPFAM" id="SSF52218">
    <property type="entry name" value="Flavoproteins"/>
    <property type="match status" value="1"/>
</dbReference>
<dbReference type="PROSITE" id="PS50902">
    <property type="entry name" value="FLAVODOXIN_LIKE"/>
    <property type="match status" value="1"/>
</dbReference>
<sequence>MSDTTKVLVLYYSMYGHIDTLAKEIAAGVAEVDGVEVALKRVPEHMSAELLSTIHARTDFDTPIASVDELADYDGILIGTPTRFGNMAGQMRNFLDQTGGLWAKGKLVGKAGGAFTSTATGGGAETTLLSVYTNFLHHGMVVVGVPYGTPEMFDTSEARAGGPYGAATLAGGDGSRQPSDKERTIARFQGRHFAGVAKKLKG</sequence>
<gene>
    <name type="ordered locus">Rru_A0373</name>
</gene>
<accession>Q2RXG7</accession>